<sequence>MASENLNDKISVFKKLKAKSDNKICFDCNAKNPTWASVTYGIFLCIDCSAVHRSLGVHISFVRSTNLDSWSSEQLKMMIYGGNNRAQVFFKQYGWSDGGKTEAKYTSRAADLYKQILAKEVAKSKAEEELDLPPSPPDSTQVPNGLSSIKTSEALKESNTLKQQEKPDVVPVSPRISRSVKKPLGAKKTGKTGGLGARKLTTKSSGTLYDQKPEESVIIQATSPVSAKSARSSFSSRFDYADNVQNREDYMSPQVVSHVAPPKSSGFFEEELEMNGGRFQKKPITSSSKLQIQETDEARKKFTNAKSISSAQYFGNDNNSADLEAKSSLKKFSGSSAISSADLFGDGDGDFPLDLTAGDLLNRLSLQAQQDISSLKNMAEETKKKLGSVASSLWV</sequence>
<reference key="1">
    <citation type="journal article" date="1999" name="Nature">
        <title>Sequence and analysis of chromosome 2 of the plant Arabidopsis thaliana.</title>
        <authorList>
            <person name="Lin X."/>
            <person name="Kaul S."/>
            <person name="Rounsley S.D."/>
            <person name="Shea T.P."/>
            <person name="Benito M.-I."/>
            <person name="Town C.D."/>
            <person name="Fujii C.Y."/>
            <person name="Mason T.M."/>
            <person name="Bowman C.L."/>
            <person name="Barnstead M.E."/>
            <person name="Feldblyum T.V."/>
            <person name="Buell C.R."/>
            <person name="Ketchum K.A."/>
            <person name="Lee J.J."/>
            <person name="Ronning C.M."/>
            <person name="Koo H.L."/>
            <person name="Moffat K.S."/>
            <person name="Cronin L.A."/>
            <person name="Shen M."/>
            <person name="Pai G."/>
            <person name="Van Aken S."/>
            <person name="Umayam L."/>
            <person name="Tallon L.J."/>
            <person name="Gill J.E."/>
            <person name="Adams M.D."/>
            <person name="Carrera A.J."/>
            <person name="Creasy T.H."/>
            <person name="Goodman H.M."/>
            <person name="Somerville C.R."/>
            <person name="Copenhaver G.P."/>
            <person name="Preuss D."/>
            <person name="Nierman W.C."/>
            <person name="White O."/>
            <person name="Eisen J.A."/>
            <person name="Salzberg S.L."/>
            <person name="Fraser C.M."/>
            <person name="Venter J.C."/>
        </authorList>
    </citation>
    <scope>NUCLEOTIDE SEQUENCE [LARGE SCALE GENOMIC DNA]</scope>
    <source>
        <strain>cv. Columbia</strain>
    </source>
</reference>
<reference key="2">
    <citation type="journal article" date="2017" name="Plant J.">
        <title>Araport11: a complete reannotation of the Arabidopsis thaliana reference genome.</title>
        <authorList>
            <person name="Cheng C.Y."/>
            <person name="Krishnakumar V."/>
            <person name="Chan A.P."/>
            <person name="Thibaud-Nissen F."/>
            <person name="Schobel S."/>
            <person name="Town C.D."/>
        </authorList>
    </citation>
    <scope>GENOME REANNOTATION</scope>
    <source>
        <strain>cv. Columbia</strain>
    </source>
</reference>
<reference key="3">
    <citation type="submission" date="2006-07" db="EMBL/GenBank/DDBJ databases">
        <title>Large-scale analysis of RIKEN Arabidopsis full-length (RAFL) cDNAs.</title>
        <authorList>
            <person name="Totoki Y."/>
            <person name="Seki M."/>
            <person name="Ishida J."/>
            <person name="Nakajima M."/>
            <person name="Enju A."/>
            <person name="Kamiya A."/>
            <person name="Narusaka M."/>
            <person name="Shin-i T."/>
            <person name="Nakagawa M."/>
            <person name="Sakamoto N."/>
            <person name="Oishi K."/>
            <person name="Kohara Y."/>
            <person name="Kobayashi M."/>
            <person name="Toyoda A."/>
            <person name="Sakaki Y."/>
            <person name="Sakurai T."/>
            <person name="Iida K."/>
            <person name="Akiyama K."/>
            <person name="Satou M."/>
            <person name="Toyoda T."/>
            <person name="Konagaya A."/>
            <person name="Carninci P."/>
            <person name="Kawai J."/>
            <person name="Hayashizaki Y."/>
            <person name="Shinozaki K."/>
        </authorList>
    </citation>
    <scope>NUCLEOTIDE SEQUENCE [LARGE SCALE MRNA] (ISOFORM 1)</scope>
    <source>
        <strain>cv. Columbia</strain>
    </source>
</reference>
<reference key="4">
    <citation type="submission" date="2002-03" db="EMBL/GenBank/DDBJ databases">
        <title>Full-length cDNA from Arabidopsis thaliana.</title>
        <authorList>
            <person name="Brover V.V."/>
            <person name="Troukhan M.E."/>
            <person name="Alexandrov N.A."/>
            <person name="Lu Y.-P."/>
            <person name="Flavell R.B."/>
            <person name="Feldmann K.A."/>
        </authorList>
    </citation>
    <scope>NUCLEOTIDE SEQUENCE [LARGE SCALE MRNA] (ISOFORM 1)</scope>
</reference>
<reference key="5">
    <citation type="journal article" date="2003" name="Plant Physiol.">
        <title>Analysis of the small GTPase gene superfamily of Arabidopsis.</title>
        <authorList>
            <person name="Vernoud V."/>
            <person name="Horton A.C."/>
            <person name="Yang Z."/>
            <person name="Nielsen E."/>
        </authorList>
    </citation>
    <scope>GENE FAMILY</scope>
    <scope>NOMENCLATURE</scope>
</reference>
<reference key="6">
    <citation type="journal article" date="2005" name="Development">
        <title>Genetic and molecular identification of genes required for female gametophyte development and function in Arabidopsis.</title>
        <authorList>
            <person name="Pagnussat G.C."/>
            <person name="Yu H.-J."/>
            <person name="Ngo Q.A."/>
            <person name="Rajani S."/>
            <person name="Mayalagu S."/>
            <person name="Johnson C.S."/>
            <person name="Capron A."/>
            <person name="Xie L.-F."/>
            <person name="Ye D."/>
            <person name="Sundaresan V."/>
        </authorList>
    </citation>
    <scope>FUNCTION</scope>
</reference>
<reference key="7">
    <citation type="journal article" date="2006" name="Plant Physiol.">
        <title>RPA, a class II ARFGAP protein, activates ARF1 and U5 and plays a role in root hair development in Arabidopsis.</title>
        <authorList>
            <person name="Song X.-F."/>
            <person name="Yang C.-Y."/>
            <person name="Liu J."/>
            <person name="Yang W.-C."/>
        </authorList>
    </citation>
    <scope>FUNCTION</scope>
    <scope>TISSUE SPECIFICITY</scope>
    <scope>SUBCELLULAR LOCATION</scope>
    <scope>DISRUPTION PHENOTYPE</scope>
</reference>
<gene>
    <name type="primary">AGD10</name>
    <name type="synonym">MEE28</name>
    <name type="synonym">RPA</name>
    <name type="ordered locus">At2g35210</name>
    <name type="ORF">T4C15.12</name>
</gene>
<keyword id="KW-0007">Acetylation</keyword>
<keyword id="KW-0025">Alternative splicing</keyword>
<keyword id="KW-0175">Coiled coil</keyword>
<keyword id="KW-0333">Golgi apparatus</keyword>
<keyword id="KW-0343">GTPase activation</keyword>
<keyword id="KW-0479">Metal-binding</keyword>
<keyword id="KW-0597">Phosphoprotein</keyword>
<keyword id="KW-1185">Reference proteome</keyword>
<keyword id="KW-0862">Zinc</keyword>
<keyword id="KW-0863">Zinc-finger</keyword>
<organism>
    <name type="scientific">Arabidopsis thaliana</name>
    <name type="common">Mouse-ear cress</name>
    <dbReference type="NCBI Taxonomy" id="3702"/>
    <lineage>
        <taxon>Eukaryota</taxon>
        <taxon>Viridiplantae</taxon>
        <taxon>Streptophyta</taxon>
        <taxon>Embryophyta</taxon>
        <taxon>Tracheophyta</taxon>
        <taxon>Spermatophyta</taxon>
        <taxon>Magnoliopsida</taxon>
        <taxon>eudicotyledons</taxon>
        <taxon>Gunneridae</taxon>
        <taxon>Pentapetalae</taxon>
        <taxon>rosids</taxon>
        <taxon>malvids</taxon>
        <taxon>Brassicales</taxon>
        <taxon>Brassicaceae</taxon>
        <taxon>Camelineae</taxon>
        <taxon>Arabidopsis</taxon>
    </lineage>
</organism>
<protein>
    <recommendedName>
        <fullName>ADP-ribosylation factor GTPase-activating protein AGD10</fullName>
        <shortName>ARF GAP AGD10</shortName>
    </recommendedName>
    <alternativeName>
        <fullName>Protein ARF-GAP DOMAIN 10</fullName>
        <shortName>AtAGD10</shortName>
    </alternativeName>
    <alternativeName>
        <fullName>Protein MATERNAL EFFECT EMBRYO ARREST 28</fullName>
    </alternativeName>
    <alternativeName>
        <fullName>Protein ROOT AND POLLEN ARFGAP</fullName>
    </alternativeName>
</protein>
<feature type="initiator methionine" description="Removed" evidence="1">
    <location>
        <position position="1"/>
    </location>
</feature>
<feature type="chain" id="PRO_0000352501" description="ADP-ribosylation factor GTPase-activating protein AGD10">
    <location>
        <begin position="2"/>
        <end position="395"/>
    </location>
</feature>
<feature type="domain" description="Arf-GAP" evidence="3">
    <location>
        <begin position="10"/>
        <end position="128"/>
    </location>
</feature>
<feature type="zinc finger region" description="C4-type" evidence="3">
    <location>
        <begin position="25"/>
        <end position="48"/>
    </location>
</feature>
<feature type="region of interest" description="Disordered" evidence="4">
    <location>
        <begin position="125"/>
        <end position="199"/>
    </location>
</feature>
<feature type="coiled-coil region" evidence="2">
    <location>
        <begin position="361"/>
        <end position="389"/>
    </location>
</feature>
<feature type="compositionally biased region" description="Polar residues" evidence="4">
    <location>
        <begin position="140"/>
        <end position="162"/>
    </location>
</feature>
<feature type="compositionally biased region" description="Basic residues" evidence="4">
    <location>
        <begin position="178"/>
        <end position="190"/>
    </location>
</feature>
<feature type="modified residue" description="N-acetylalanine" evidence="1">
    <location>
        <position position="2"/>
    </location>
</feature>
<feature type="modified residue" description="Phosphoserine" evidence="1">
    <location>
        <position position="307"/>
    </location>
</feature>
<feature type="splice variant" id="VSP_035551" description="In isoform 2." evidence="7">
    <original>GSSAISSADLFGDGDGDFPLDLTAGDLLNRLSLQAQQD</original>
    <variation>QSLVLICLETVMEISLLISLRVIFSTAYLSRHNKTYHH</variation>
    <location>
        <begin position="334"/>
        <end position="371"/>
    </location>
</feature>
<feature type="splice variant" id="VSP_035552" description="In isoform 2." evidence="7">
    <location>
        <begin position="372"/>
        <end position="395"/>
    </location>
</feature>
<proteinExistence type="evidence at transcript level"/>
<comment type="function">
    <text evidence="5 6">GTPase-activating protein (GAP) for ADP ribosylation factor (ARF). Activates ARF1 and ARF2. Required for female gametophyte development. Involved in root hair and pollen tube growth.</text>
</comment>
<comment type="subcellular location">
    <subcellularLocation>
        <location evidence="6">Golgi apparatus</location>
    </subcellularLocation>
</comment>
<comment type="alternative products">
    <event type="alternative splicing"/>
    <isoform>
        <id>O82171-1</id>
        <name>1</name>
        <sequence type="displayed"/>
    </isoform>
    <isoform>
        <id>O82171-2</id>
        <name>2</name>
        <sequence type="described" ref="VSP_035551 VSP_035552"/>
    </isoform>
</comment>
<comment type="tissue specificity">
    <text evidence="6">Expressed specifically in roots, pollen grains and pollen tubes.</text>
</comment>
<comment type="domain">
    <text>The C-terminal domain (317-395) is responsible for the Golgi localization.</text>
</comment>
<comment type="disruption phenotype">
    <text evidence="6">Plants are arrested during endosperm development and have altered root hair development and pollen tube elongation.</text>
</comment>
<accession>O82171</accession>
<accession>Q3EBM9</accession>
<evidence type="ECO:0000250" key="1">
    <source>
        <dbReference type="UniProtKB" id="Q9FIQ0"/>
    </source>
</evidence>
<evidence type="ECO:0000255" key="2"/>
<evidence type="ECO:0000255" key="3">
    <source>
        <dbReference type="PROSITE-ProRule" id="PRU00288"/>
    </source>
</evidence>
<evidence type="ECO:0000256" key="4">
    <source>
        <dbReference type="SAM" id="MobiDB-lite"/>
    </source>
</evidence>
<evidence type="ECO:0000269" key="5">
    <source>
    </source>
</evidence>
<evidence type="ECO:0000269" key="6">
    <source>
    </source>
</evidence>
<evidence type="ECO:0000305" key="7"/>
<name>AGD10_ARATH</name>
<dbReference type="EMBL" id="AC004667">
    <property type="protein sequence ID" value="AAC61816.1"/>
    <property type="molecule type" value="Genomic_DNA"/>
</dbReference>
<dbReference type="EMBL" id="CP002685">
    <property type="protein sequence ID" value="AEC09080.1"/>
    <property type="molecule type" value="Genomic_DNA"/>
</dbReference>
<dbReference type="EMBL" id="CP002685">
    <property type="protein sequence ID" value="AEC09081.1"/>
    <property type="molecule type" value="Genomic_DNA"/>
</dbReference>
<dbReference type="EMBL" id="AY085599">
    <property type="protein sequence ID" value="AAM62820.1"/>
    <property type="molecule type" value="mRNA"/>
</dbReference>
<dbReference type="EMBL" id="AK229368">
    <property type="protein sequence ID" value="BAF01231.1"/>
    <property type="molecule type" value="mRNA"/>
</dbReference>
<dbReference type="PIR" id="H84765">
    <property type="entry name" value="H84765"/>
</dbReference>
<dbReference type="RefSeq" id="NP_565801.1">
    <molecule id="O82171-1"/>
    <property type="nucleotide sequence ID" value="NM_129074.3"/>
</dbReference>
<dbReference type="RefSeq" id="NP_973603.1">
    <molecule id="O82171-2"/>
    <property type="nucleotide sequence ID" value="NM_201874.2"/>
</dbReference>
<dbReference type="SMR" id="O82171"/>
<dbReference type="FunCoup" id="O82171">
    <property type="interactions" value="2595"/>
</dbReference>
<dbReference type="STRING" id="3702.O82171"/>
<dbReference type="iPTMnet" id="O82171"/>
<dbReference type="PaxDb" id="3702-AT2G35210.1"/>
<dbReference type="ProteomicsDB" id="244741">
    <molecule id="O82171-1"/>
</dbReference>
<dbReference type="EnsemblPlants" id="AT2G35210.1">
    <molecule id="O82171-1"/>
    <property type="protein sequence ID" value="AT2G35210.1"/>
    <property type="gene ID" value="AT2G35210"/>
</dbReference>
<dbReference type="EnsemblPlants" id="AT2G35210.2">
    <molecule id="O82171-2"/>
    <property type="protein sequence ID" value="AT2G35210.2"/>
    <property type="gene ID" value="AT2G35210"/>
</dbReference>
<dbReference type="GeneID" id="818088"/>
<dbReference type="Gramene" id="AT2G35210.1">
    <molecule id="O82171-1"/>
    <property type="protein sequence ID" value="AT2G35210.1"/>
    <property type="gene ID" value="AT2G35210"/>
</dbReference>
<dbReference type="Gramene" id="AT2G35210.2">
    <molecule id="O82171-2"/>
    <property type="protein sequence ID" value="AT2G35210.2"/>
    <property type="gene ID" value="AT2G35210"/>
</dbReference>
<dbReference type="KEGG" id="ath:AT2G35210"/>
<dbReference type="Araport" id="AT2G35210"/>
<dbReference type="TAIR" id="AT2G35210">
    <property type="gene designation" value="RPA"/>
</dbReference>
<dbReference type="eggNOG" id="KOG0706">
    <property type="taxonomic scope" value="Eukaryota"/>
</dbReference>
<dbReference type="HOGENOM" id="CLU_023062_0_0_1"/>
<dbReference type="InParanoid" id="O82171"/>
<dbReference type="OMA" id="TREQYMS"/>
<dbReference type="OrthoDB" id="983479at2759"/>
<dbReference type="PhylomeDB" id="O82171"/>
<dbReference type="PRO" id="PR:O82171"/>
<dbReference type="Proteomes" id="UP000006548">
    <property type="component" value="Chromosome 2"/>
</dbReference>
<dbReference type="ExpressionAtlas" id="O82171">
    <property type="expression patterns" value="baseline and differential"/>
</dbReference>
<dbReference type="GO" id="GO:0005794">
    <property type="term" value="C:Golgi apparatus"/>
    <property type="evidence" value="ECO:0007669"/>
    <property type="project" value="UniProtKB-SubCell"/>
</dbReference>
<dbReference type="GO" id="GO:0005096">
    <property type="term" value="F:GTPase activator activity"/>
    <property type="evidence" value="ECO:0007669"/>
    <property type="project" value="UniProtKB-KW"/>
</dbReference>
<dbReference type="GO" id="GO:0008270">
    <property type="term" value="F:zinc ion binding"/>
    <property type="evidence" value="ECO:0007669"/>
    <property type="project" value="UniProtKB-KW"/>
</dbReference>
<dbReference type="GO" id="GO:0009793">
    <property type="term" value="P:embryo development ending in seed dormancy"/>
    <property type="evidence" value="ECO:0000315"/>
    <property type="project" value="TAIR"/>
</dbReference>
<dbReference type="GO" id="GO:0009555">
    <property type="term" value="P:pollen development"/>
    <property type="evidence" value="ECO:0000315"/>
    <property type="project" value="TAIR"/>
</dbReference>
<dbReference type="CDD" id="cd08831">
    <property type="entry name" value="ArfGap_ArfGap2_3_like"/>
    <property type="match status" value="1"/>
</dbReference>
<dbReference type="FunFam" id="1.10.220.150:FF:000012">
    <property type="entry name" value="ADP-ribosylation factor GTPase-activating protein AGD10"/>
    <property type="match status" value="1"/>
</dbReference>
<dbReference type="Gene3D" id="1.10.220.150">
    <property type="entry name" value="Arf GTPase activating protein"/>
    <property type="match status" value="1"/>
</dbReference>
<dbReference type="InterPro" id="IPR037278">
    <property type="entry name" value="ARFGAP/RecO"/>
</dbReference>
<dbReference type="InterPro" id="IPR001164">
    <property type="entry name" value="ArfGAP_dom"/>
</dbReference>
<dbReference type="InterPro" id="IPR038508">
    <property type="entry name" value="ArfGAP_dom_sf"/>
</dbReference>
<dbReference type="PANTHER" id="PTHR45686">
    <property type="entry name" value="ADP-RIBOSYLATION FACTOR GTPASE ACTIVATING PROTEIN 3, ISOFORM H-RELATED"/>
    <property type="match status" value="1"/>
</dbReference>
<dbReference type="PANTHER" id="PTHR45686:SF19">
    <property type="entry name" value="ADP-RIBOSYLATION FACTOR GTPASE-ACTIVATING PROTEIN AGD10"/>
    <property type="match status" value="1"/>
</dbReference>
<dbReference type="Pfam" id="PF01412">
    <property type="entry name" value="ArfGap"/>
    <property type="match status" value="1"/>
</dbReference>
<dbReference type="PRINTS" id="PR00405">
    <property type="entry name" value="REVINTRACTNG"/>
</dbReference>
<dbReference type="SMART" id="SM00105">
    <property type="entry name" value="ArfGap"/>
    <property type="match status" value="1"/>
</dbReference>
<dbReference type="SUPFAM" id="SSF57863">
    <property type="entry name" value="ArfGap/RecO-like zinc finger"/>
    <property type="match status" value="1"/>
</dbReference>
<dbReference type="PROSITE" id="PS50115">
    <property type="entry name" value="ARFGAP"/>
    <property type="match status" value="1"/>
</dbReference>